<feature type="chain" id="PRO_0000241336" description="Large ribosomal subunit protein uL3">
    <location>
        <begin position="1"/>
        <end position="218"/>
    </location>
</feature>
<keyword id="KW-1185">Reference proteome</keyword>
<keyword id="KW-0687">Ribonucleoprotein</keyword>
<keyword id="KW-0689">Ribosomal protein</keyword>
<keyword id="KW-0694">RNA-binding</keyword>
<keyword id="KW-0699">rRNA-binding</keyword>
<evidence type="ECO:0000255" key="1">
    <source>
        <dbReference type="HAMAP-Rule" id="MF_01325"/>
    </source>
</evidence>
<evidence type="ECO:0000305" key="2"/>
<sequence length="218" mass="22953">MSDIEIKGILGKKLGMTQIFDEENRVVPVTVVEAGPCVVTQVRSKETDGYEAVQIAFGEIDPRKVNKPAAGHFKKAGVTPRRHVAEIRVADASSYEVGQDVTVDIFNDVKFVDVTGTTKGKGYAGGMKRHGFAGQGAAHGNQAAHRRVGSIGQAATPGRVFKGKRMAGRMGNDRVTQQNLKLAKVDAESNLLLIKGAVPGVNGGLVVVKTAVKGGAHA</sequence>
<protein>
    <recommendedName>
        <fullName evidence="1">Large ribosomal subunit protein uL3</fullName>
    </recommendedName>
    <alternativeName>
        <fullName evidence="2">50S ribosomal protein L3</fullName>
    </alternativeName>
</protein>
<proteinExistence type="inferred from homology"/>
<name>RL3_CORJK</name>
<reference key="1">
    <citation type="journal article" date="2005" name="J. Bacteriol.">
        <title>Complete genome sequence and analysis of the multiresistant nosocomial pathogen Corynebacterium jeikeium K411, a lipid-requiring bacterium of the human skin flora.</title>
        <authorList>
            <person name="Tauch A."/>
            <person name="Kaiser O."/>
            <person name="Hain T."/>
            <person name="Goesmann A."/>
            <person name="Weisshaar B."/>
            <person name="Albersmeier A."/>
            <person name="Bekel T."/>
            <person name="Bischoff N."/>
            <person name="Brune I."/>
            <person name="Chakraborty T."/>
            <person name="Kalinowski J."/>
            <person name="Meyer F."/>
            <person name="Rupp O."/>
            <person name="Schneiker S."/>
            <person name="Viehoever P."/>
            <person name="Puehler A."/>
        </authorList>
    </citation>
    <scope>NUCLEOTIDE SEQUENCE [LARGE SCALE GENOMIC DNA]</scope>
    <source>
        <strain>K411</strain>
    </source>
</reference>
<dbReference type="EMBL" id="CR931997">
    <property type="protein sequence ID" value="CAI38010.1"/>
    <property type="molecule type" value="Genomic_DNA"/>
</dbReference>
<dbReference type="RefSeq" id="WP_011274167.1">
    <property type="nucleotide sequence ID" value="NC_007164.1"/>
</dbReference>
<dbReference type="SMR" id="Q4JT47"/>
<dbReference type="STRING" id="306537.jk1833"/>
<dbReference type="KEGG" id="cjk:jk1833"/>
<dbReference type="PATRIC" id="fig|306537.10.peg.1856"/>
<dbReference type="eggNOG" id="COG0087">
    <property type="taxonomic scope" value="Bacteria"/>
</dbReference>
<dbReference type="HOGENOM" id="CLU_044142_4_1_11"/>
<dbReference type="OrthoDB" id="9806135at2"/>
<dbReference type="Proteomes" id="UP000000545">
    <property type="component" value="Chromosome"/>
</dbReference>
<dbReference type="GO" id="GO:0022625">
    <property type="term" value="C:cytosolic large ribosomal subunit"/>
    <property type="evidence" value="ECO:0007669"/>
    <property type="project" value="TreeGrafter"/>
</dbReference>
<dbReference type="GO" id="GO:0019843">
    <property type="term" value="F:rRNA binding"/>
    <property type="evidence" value="ECO:0007669"/>
    <property type="project" value="UniProtKB-UniRule"/>
</dbReference>
<dbReference type="GO" id="GO:0003735">
    <property type="term" value="F:structural constituent of ribosome"/>
    <property type="evidence" value="ECO:0007669"/>
    <property type="project" value="InterPro"/>
</dbReference>
<dbReference type="GO" id="GO:0006412">
    <property type="term" value="P:translation"/>
    <property type="evidence" value="ECO:0007669"/>
    <property type="project" value="UniProtKB-UniRule"/>
</dbReference>
<dbReference type="FunFam" id="2.40.30.10:FF:000004">
    <property type="entry name" value="50S ribosomal protein L3"/>
    <property type="match status" value="1"/>
</dbReference>
<dbReference type="FunFam" id="3.30.160.810:FF:000003">
    <property type="entry name" value="50S ribosomal protein L3"/>
    <property type="match status" value="1"/>
</dbReference>
<dbReference type="Gene3D" id="3.30.160.810">
    <property type="match status" value="1"/>
</dbReference>
<dbReference type="Gene3D" id="2.40.30.10">
    <property type="entry name" value="Translation factors"/>
    <property type="match status" value="1"/>
</dbReference>
<dbReference type="HAMAP" id="MF_01325_B">
    <property type="entry name" value="Ribosomal_uL3_B"/>
    <property type="match status" value="1"/>
</dbReference>
<dbReference type="InterPro" id="IPR000597">
    <property type="entry name" value="Ribosomal_uL3"/>
</dbReference>
<dbReference type="InterPro" id="IPR019927">
    <property type="entry name" value="Ribosomal_uL3_bac/org-type"/>
</dbReference>
<dbReference type="InterPro" id="IPR019926">
    <property type="entry name" value="Ribosomal_uL3_CS"/>
</dbReference>
<dbReference type="InterPro" id="IPR009000">
    <property type="entry name" value="Transl_B-barrel_sf"/>
</dbReference>
<dbReference type="NCBIfam" id="TIGR03625">
    <property type="entry name" value="L3_bact"/>
    <property type="match status" value="1"/>
</dbReference>
<dbReference type="PANTHER" id="PTHR11229">
    <property type="entry name" value="50S RIBOSOMAL PROTEIN L3"/>
    <property type="match status" value="1"/>
</dbReference>
<dbReference type="PANTHER" id="PTHR11229:SF16">
    <property type="entry name" value="LARGE RIBOSOMAL SUBUNIT PROTEIN UL3C"/>
    <property type="match status" value="1"/>
</dbReference>
<dbReference type="Pfam" id="PF00297">
    <property type="entry name" value="Ribosomal_L3"/>
    <property type="match status" value="1"/>
</dbReference>
<dbReference type="SUPFAM" id="SSF50447">
    <property type="entry name" value="Translation proteins"/>
    <property type="match status" value="1"/>
</dbReference>
<dbReference type="PROSITE" id="PS00474">
    <property type="entry name" value="RIBOSOMAL_L3"/>
    <property type="match status" value="1"/>
</dbReference>
<comment type="function">
    <text evidence="1">One of the primary rRNA binding proteins, it binds directly near the 3'-end of the 23S rRNA, where it nucleates assembly of the 50S subunit.</text>
</comment>
<comment type="subunit">
    <text evidence="1">Part of the 50S ribosomal subunit. Forms a cluster with proteins L14 and L19.</text>
</comment>
<comment type="similarity">
    <text evidence="1">Belongs to the universal ribosomal protein uL3 family.</text>
</comment>
<accession>Q4JT47</accession>
<gene>
    <name evidence="1" type="primary">rplC</name>
    <name type="ordered locus">jk1833</name>
</gene>
<organism>
    <name type="scientific">Corynebacterium jeikeium (strain K411)</name>
    <dbReference type="NCBI Taxonomy" id="306537"/>
    <lineage>
        <taxon>Bacteria</taxon>
        <taxon>Bacillati</taxon>
        <taxon>Actinomycetota</taxon>
        <taxon>Actinomycetes</taxon>
        <taxon>Mycobacteriales</taxon>
        <taxon>Corynebacteriaceae</taxon>
        <taxon>Corynebacterium</taxon>
    </lineage>
</organism>